<reference key="1">
    <citation type="journal article" date="2009" name="PLoS ONE">
        <title>Salmonella paratyphi C: genetic divergence from Salmonella choleraesuis and pathogenic convergence with Salmonella typhi.</title>
        <authorList>
            <person name="Liu W.-Q."/>
            <person name="Feng Y."/>
            <person name="Wang Y."/>
            <person name="Zou Q.-H."/>
            <person name="Chen F."/>
            <person name="Guo J.-T."/>
            <person name="Peng Y.-H."/>
            <person name="Jin Y."/>
            <person name="Li Y.-G."/>
            <person name="Hu S.-N."/>
            <person name="Johnston R.N."/>
            <person name="Liu G.-R."/>
            <person name="Liu S.-L."/>
        </authorList>
    </citation>
    <scope>NUCLEOTIDE SEQUENCE [LARGE SCALE GENOMIC DNA]</scope>
    <source>
        <strain>RKS4594</strain>
    </source>
</reference>
<comment type="function">
    <text evidence="1">Catalyzes the NADPH-dependent reduction of 7-cyano-7-deazaguanine (preQ0) to 7-aminomethyl-7-deazaguanine (preQ1).</text>
</comment>
<comment type="catalytic activity">
    <reaction evidence="1">
        <text>7-aminomethyl-7-carbaguanine + 2 NADP(+) = 7-cyano-7-deazaguanine + 2 NADPH + 3 H(+)</text>
        <dbReference type="Rhea" id="RHEA:13409"/>
        <dbReference type="ChEBI" id="CHEBI:15378"/>
        <dbReference type="ChEBI" id="CHEBI:45075"/>
        <dbReference type="ChEBI" id="CHEBI:57783"/>
        <dbReference type="ChEBI" id="CHEBI:58349"/>
        <dbReference type="ChEBI" id="CHEBI:58703"/>
        <dbReference type="EC" id="1.7.1.13"/>
    </reaction>
</comment>
<comment type="pathway">
    <text evidence="1">tRNA modification; tRNA-queuosine biosynthesis.</text>
</comment>
<comment type="subunit">
    <text evidence="1">Homodimer.</text>
</comment>
<comment type="subcellular location">
    <subcellularLocation>
        <location evidence="1">Cytoplasm</location>
    </subcellularLocation>
</comment>
<comment type="similarity">
    <text evidence="1">Belongs to the GTP cyclohydrolase I family. QueF type 2 subfamily.</text>
</comment>
<keyword id="KW-0963">Cytoplasm</keyword>
<keyword id="KW-0521">NADP</keyword>
<keyword id="KW-0560">Oxidoreductase</keyword>
<keyword id="KW-0671">Queuosine biosynthesis</keyword>
<protein>
    <recommendedName>
        <fullName evidence="1">NADPH-dependent 7-cyano-7-deazaguanine reductase</fullName>
        <ecNumber evidence="1">1.7.1.13</ecNumber>
    </recommendedName>
    <alternativeName>
        <fullName evidence="1">7-cyano-7-carbaguanine reductase</fullName>
    </alternativeName>
    <alternativeName>
        <fullName evidence="1">NADPH-dependent nitrile oxidoreductase</fullName>
    </alternativeName>
    <alternativeName>
        <fullName evidence="1">PreQ(0) reductase</fullName>
    </alternativeName>
</protein>
<feature type="chain" id="PRO_1000213081" description="NADPH-dependent 7-cyano-7-deazaguanine reductase">
    <location>
        <begin position="1"/>
        <end position="282"/>
    </location>
</feature>
<feature type="active site" description="Thioimide intermediate" evidence="1">
    <location>
        <position position="190"/>
    </location>
</feature>
<feature type="active site" description="Proton donor" evidence="1">
    <location>
        <position position="197"/>
    </location>
</feature>
<feature type="binding site" evidence="1">
    <location>
        <begin position="88"/>
        <end position="90"/>
    </location>
    <ligand>
        <name>substrate</name>
    </ligand>
</feature>
<feature type="binding site" evidence="1">
    <location>
        <begin position="90"/>
        <end position="91"/>
    </location>
    <ligand>
        <name>NADPH</name>
        <dbReference type="ChEBI" id="CHEBI:57783"/>
    </ligand>
</feature>
<feature type="binding site" evidence="1">
    <location>
        <begin position="229"/>
        <end position="230"/>
    </location>
    <ligand>
        <name>substrate</name>
    </ligand>
</feature>
<feature type="binding site" evidence="1">
    <location>
        <begin position="258"/>
        <end position="259"/>
    </location>
    <ligand>
        <name>NADPH</name>
        <dbReference type="ChEBI" id="CHEBI:57783"/>
    </ligand>
</feature>
<accession>C0PXF6</accession>
<proteinExistence type="inferred from homology"/>
<evidence type="ECO:0000255" key="1">
    <source>
        <dbReference type="HAMAP-Rule" id="MF_00817"/>
    </source>
</evidence>
<gene>
    <name evidence="1" type="primary">queF</name>
    <name type="ordered locus">SPC_3025</name>
</gene>
<name>QUEF_SALPC</name>
<organism>
    <name type="scientific">Salmonella paratyphi C (strain RKS4594)</name>
    <dbReference type="NCBI Taxonomy" id="476213"/>
    <lineage>
        <taxon>Bacteria</taxon>
        <taxon>Pseudomonadati</taxon>
        <taxon>Pseudomonadota</taxon>
        <taxon>Gammaproteobacteria</taxon>
        <taxon>Enterobacterales</taxon>
        <taxon>Enterobacteriaceae</taxon>
        <taxon>Salmonella</taxon>
    </lineage>
</organism>
<sequence>MSSYENHQALDGLTLGKSTDYRDNYDASLLQGVPRSLNRDPLGLTADNLPFHGADIWTLYELSWLNSQGLPQVAVGHVELDYTSVNLIESKSFKLYLNSFNQTRFDTWETVRQTLERDLRACAQGNVSVRLHRLDELEGQPVAHFHGTCIDDQDISIDNYQFTTDYLQHAVSGEKQVEETLVSHLLKSNCLITHQPDWGSIQIQYRGRKIDREKLLRYLVSFRHHNEFHEQCVERIFNDILRFCQPETLSVYARYTRRGGLDINPWRSNTDFVPATGRLARQ</sequence>
<dbReference type="EC" id="1.7.1.13" evidence="1"/>
<dbReference type="EMBL" id="CP000857">
    <property type="protein sequence ID" value="ACN47114.1"/>
    <property type="molecule type" value="Genomic_DNA"/>
</dbReference>
<dbReference type="RefSeq" id="WP_000100463.1">
    <property type="nucleotide sequence ID" value="NC_012125.1"/>
</dbReference>
<dbReference type="SMR" id="C0PXF6"/>
<dbReference type="KEGG" id="sei:SPC_3025"/>
<dbReference type="HOGENOM" id="CLU_054738_0_0_6"/>
<dbReference type="UniPathway" id="UPA00392"/>
<dbReference type="Proteomes" id="UP000001599">
    <property type="component" value="Chromosome"/>
</dbReference>
<dbReference type="GO" id="GO:0005737">
    <property type="term" value="C:cytoplasm"/>
    <property type="evidence" value="ECO:0007669"/>
    <property type="project" value="UniProtKB-SubCell"/>
</dbReference>
<dbReference type="GO" id="GO:0033739">
    <property type="term" value="F:preQ1 synthase activity"/>
    <property type="evidence" value="ECO:0007669"/>
    <property type="project" value="UniProtKB-UniRule"/>
</dbReference>
<dbReference type="GO" id="GO:0008616">
    <property type="term" value="P:queuosine biosynthetic process"/>
    <property type="evidence" value="ECO:0007669"/>
    <property type="project" value="UniProtKB-UniRule"/>
</dbReference>
<dbReference type="GO" id="GO:0006400">
    <property type="term" value="P:tRNA modification"/>
    <property type="evidence" value="ECO:0007669"/>
    <property type="project" value="UniProtKB-UniRule"/>
</dbReference>
<dbReference type="FunFam" id="3.30.1130.10:FF:000004">
    <property type="entry name" value="NADPH-dependent 7-cyano-7-deazaguanine reductase"/>
    <property type="match status" value="1"/>
</dbReference>
<dbReference type="Gene3D" id="3.30.1130.10">
    <property type="match status" value="2"/>
</dbReference>
<dbReference type="HAMAP" id="MF_00817">
    <property type="entry name" value="QueF_type2"/>
    <property type="match status" value="1"/>
</dbReference>
<dbReference type="InterPro" id="IPR043133">
    <property type="entry name" value="GTP-CH-I_C/QueF"/>
</dbReference>
<dbReference type="InterPro" id="IPR050084">
    <property type="entry name" value="NADPH_dep_7-cyano-7-deazaG_red"/>
</dbReference>
<dbReference type="InterPro" id="IPR029500">
    <property type="entry name" value="QueF"/>
</dbReference>
<dbReference type="InterPro" id="IPR029139">
    <property type="entry name" value="QueF_N"/>
</dbReference>
<dbReference type="InterPro" id="IPR016428">
    <property type="entry name" value="QueF_type2"/>
</dbReference>
<dbReference type="NCBIfam" id="TIGR03138">
    <property type="entry name" value="QueF"/>
    <property type="match status" value="1"/>
</dbReference>
<dbReference type="PANTHER" id="PTHR34354">
    <property type="entry name" value="NADPH-DEPENDENT 7-CYANO-7-DEAZAGUANINE REDUCTASE"/>
    <property type="match status" value="1"/>
</dbReference>
<dbReference type="PANTHER" id="PTHR34354:SF1">
    <property type="entry name" value="NADPH-DEPENDENT 7-CYANO-7-DEAZAGUANINE REDUCTASE"/>
    <property type="match status" value="1"/>
</dbReference>
<dbReference type="Pfam" id="PF14489">
    <property type="entry name" value="QueF"/>
    <property type="match status" value="1"/>
</dbReference>
<dbReference type="Pfam" id="PF14819">
    <property type="entry name" value="QueF_N"/>
    <property type="match status" value="1"/>
</dbReference>
<dbReference type="PIRSF" id="PIRSF004750">
    <property type="entry name" value="Nitrile_oxidored_YqcD_prd"/>
    <property type="match status" value="1"/>
</dbReference>
<dbReference type="SUPFAM" id="SSF55620">
    <property type="entry name" value="Tetrahydrobiopterin biosynthesis enzymes-like"/>
    <property type="match status" value="1"/>
</dbReference>